<comment type="function">
    <text evidence="4 7">Cytochrome P450 monooxygenase that is able to use testosterone, anthracene, carbazole, pyrene, phenanthrene and trans-stilbene as substrates for oxidation (PubMed:21938516). These multifunctional properties against a series of polycyclic aromatic hydrocarbons (PAHs) suggest that CYP219 would play important roles, at least in part, in fungal metabolic systems involved in xenobiotic detoxification (Probable).</text>
</comment>
<comment type="cofactor">
    <cofactor evidence="1">
        <name>heme</name>
        <dbReference type="ChEBI" id="CHEBI:30413"/>
    </cofactor>
</comment>
<comment type="pathway">
    <text evidence="6">Secondary metabolite biosynthesis.</text>
</comment>
<comment type="similarity">
    <text evidence="6">Belongs to the cytochrome P450 family.</text>
</comment>
<evidence type="ECO:0000250" key="1">
    <source>
        <dbReference type="UniProtKB" id="P04798"/>
    </source>
</evidence>
<evidence type="ECO:0000255" key="2"/>
<evidence type="ECO:0000255" key="3">
    <source>
        <dbReference type="PROSITE-ProRule" id="PRU00498"/>
    </source>
</evidence>
<evidence type="ECO:0000269" key="4">
    <source>
    </source>
</evidence>
<evidence type="ECO:0000303" key="5">
    <source>
    </source>
</evidence>
<evidence type="ECO:0000305" key="6"/>
<evidence type="ECO:0000305" key="7">
    <source>
    </source>
</evidence>
<reference key="1">
    <citation type="journal article" date="2012" name="Arch. Microbiol.">
        <title>Molecular identification and functional characterization of cytochrome P450 monooxygenases from the brown-rot basidiomycete Postia placenta.</title>
        <authorList>
            <person name="Ide M."/>
            <person name="Ichinose H."/>
            <person name="Wariishi H."/>
        </authorList>
    </citation>
    <scope>NUCLEOTIDE SEQUENCE [MRNA]</scope>
    <scope>IDENTIFICATION</scope>
    <scope>FUNCTION</scope>
    <scope>CATALYTIC ACTIVITY</scope>
    <source>
        <strain>ATCC 44394 / Madison 698-R</strain>
    </source>
</reference>
<name>CY219_POSPM</name>
<keyword id="KW-0325">Glycoprotein</keyword>
<keyword id="KW-0349">Heme</keyword>
<keyword id="KW-0408">Iron</keyword>
<keyword id="KW-0479">Metal-binding</keyword>
<keyword id="KW-0503">Monooxygenase</keyword>
<keyword id="KW-0560">Oxidoreductase</keyword>
<keyword id="KW-0732">Signal</keyword>
<proteinExistence type="evidence at protein level"/>
<gene>
    <name evidence="5" type="primary">CYP219</name>
    <name evidence="5" type="synonym">CYP5150D1</name>
</gene>
<dbReference type="EC" id="1.-.-.-" evidence="7"/>
<dbReference type="EMBL" id="AB573392">
    <property type="protein sequence ID" value="BAK09525.1"/>
    <property type="molecule type" value="mRNA"/>
</dbReference>
<dbReference type="SMR" id="F1SYI1"/>
<dbReference type="GlyCosmos" id="F1SYI1">
    <property type="glycosylation" value="2 sites, No reported glycans"/>
</dbReference>
<dbReference type="GO" id="GO:0020037">
    <property type="term" value="F:heme binding"/>
    <property type="evidence" value="ECO:0007669"/>
    <property type="project" value="InterPro"/>
</dbReference>
<dbReference type="GO" id="GO:0005506">
    <property type="term" value="F:iron ion binding"/>
    <property type="evidence" value="ECO:0007669"/>
    <property type="project" value="InterPro"/>
</dbReference>
<dbReference type="GO" id="GO:0004497">
    <property type="term" value="F:monooxygenase activity"/>
    <property type="evidence" value="ECO:0007669"/>
    <property type="project" value="UniProtKB-KW"/>
</dbReference>
<dbReference type="GO" id="GO:0016705">
    <property type="term" value="F:oxidoreductase activity, acting on paired donors, with incorporation or reduction of molecular oxygen"/>
    <property type="evidence" value="ECO:0007669"/>
    <property type="project" value="InterPro"/>
</dbReference>
<dbReference type="CDD" id="cd11069">
    <property type="entry name" value="CYP_FUM15-like"/>
    <property type="match status" value="1"/>
</dbReference>
<dbReference type="Gene3D" id="1.10.630.10">
    <property type="entry name" value="Cytochrome P450"/>
    <property type="match status" value="1"/>
</dbReference>
<dbReference type="InterPro" id="IPR001128">
    <property type="entry name" value="Cyt_P450"/>
</dbReference>
<dbReference type="InterPro" id="IPR002401">
    <property type="entry name" value="Cyt_P450_E_grp-I"/>
</dbReference>
<dbReference type="InterPro" id="IPR036396">
    <property type="entry name" value="Cyt_P450_sf"/>
</dbReference>
<dbReference type="InterPro" id="IPR050121">
    <property type="entry name" value="Cytochrome_P450_monoxygenase"/>
</dbReference>
<dbReference type="PANTHER" id="PTHR24305">
    <property type="entry name" value="CYTOCHROME P450"/>
    <property type="match status" value="1"/>
</dbReference>
<dbReference type="PANTHER" id="PTHR24305:SF166">
    <property type="entry name" value="CYTOCHROME P450 12A4, MITOCHONDRIAL-RELATED"/>
    <property type="match status" value="1"/>
</dbReference>
<dbReference type="Pfam" id="PF00067">
    <property type="entry name" value="p450"/>
    <property type="match status" value="1"/>
</dbReference>
<dbReference type="PRINTS" id="PR00463">
    <property type="entry name" value="EP450I"/>
</dbReference>
<dbReference type="PRINTS" id="PR00385">
    <property type="entry name" value="P450"/>
</dbReference>
<dbReference type="SUPFAM" id="SSF48264">
    <property type="entry name" value="Cytochrome P450"/>
    <property type="match status" value="1"/>
</dbReference>
<sequence>MATLIVLLYGLLAFGTVWLVRRQSKNHDAHRVMRNIPGPPSRSWMKGNIMQYFTRHGRAFQRDVALNYGPVVRLQGPLGRKILYVSDPKALHTIIIKEENVFEEPESTLITFNLLFGDCLVGSLGENHRRQRKLLNPVFSVNHMRHMLPMFYNVIFKLREVVMAKVRGGEKEIDVLEWTGRAALELIGQGGLGYSFDPLVSDKEARNEYGDALKAMLPALMNIESLRQILPHLVKMGPKWFRRLATDIFPNAHVQTVKHVVDTMSKRSQEIFREKKAALKSGDEAVLRQVGEGKDIMSILLRANTAASDADKLPESQMVAQMSLLVFAATDTTSNTLAHILQLLAEHSNVQSKLREELLQSGAGTGNTSYDELMKLPLLDAVCRETLRVHPPATLLVRVPRKDSILPLSEPVIGLDGTIIKDVPVPEGTEIVIGVFGSNVNKSLWGEDALEWKPERWLSPLPRAVNDASIPGVYSNLMTFLGGKRACIGFKFSEMEMKVVLAVMVSNFVFELEKEIEWNVAGVDYPTVVWDGDRPQLPLKVRVYKS</sequence>
<accession>F1SYI1</accession>
<organism>
    <name type="scientific">Postia placenta (strain ATCC 44394 / Madison 698-R)</name>
    <name type="common">Brown rot fungus</name>
    <name type="synonym">Poria monticola</name>
    <dbReference type="NCBI Taxonomy" id="561896"/>
    <lineage>
        <taxon>Eukaryota</taxon>
        <taxon>Fungi</taxon>
        <taxon>Dikarya</taxon>
        <taxon>Basidiomycota</taxon>
        <taxon>Agaricomycotina</taxon>
        <taxon>Agaricomycetes</taxon>
        <taxon>Polyporales</taxon>
        <taxon>Adustoporiaceae</taxon>
        <taxon>Rhodonia</taxon>
    </lineage>
</organism>
<protein>
    <recommendedName>
        <fullName evidence="5">Cytochrome P450 monooxygenase 219</fullName>
        <ecNumber evidence="7">1.-.-.-</ecNumber>
    </recommendedName>
</protein>
<feature type="signal peptide" evidence="2">
    <location>
        <begin position="1"/>
        <end position="22"/>
    </location>
</feature>
<feature type="chain" id="PRO_0000451367" description="Cytochrome P450 monooxygenase 219">
    <location>
        <begin position="23"/>
        <end position="546"/>
    </location>
</feature>
<feature type="binding site" description="axial binding residue" evidence="1">
    <location>
        <position position="487"/>
    </location>
    <ligand>
        <name>heme</name>
        <dbReference type="ChEBI" id="CHEBI:30413"/>
    </ligand>
    <ligandPart>
        <name>Fe</name>
        <dbReference type="ChEBI" id="CHEBI:18248"/>
    </ligandPart>
</feature>
<feature type="glycosylation site" description="N-linked (GlcNAc...) asparagine" evidence="3">
    <location>
        <position position="367"/>
    </location>
</feature>
<feature type="glycosylation site" description="N-linked (GlcNAc...) asparagine" evidence="3">
    <location>
        <position position="441"/>
    </location>
</feature>